<dbReference type="EMBL" id="AF454824">
    <property type="protein sequence ID" value="AAM75306.1"/>
    <property type="molecule type" value="Genomic_DNA"/>
</dbReference>
<dbReference type="EMBL" id="AE016830">
    <property type="protein sequence ID" value="AAO80421.1"/>
    <property type="molecule type" value="Genomic_DNA"/>
</dbReference>
<dbReference type="RefSeq" id="NP_814350.1">
    <property type="nucleotide sequence ID" value="NC_004668.1"/>
</dbReference>
<dbReference type="SMR" id="Q8KU58"/>
<dbReference type="STRING" id="226185.EF_0585"/>
<dbReference type="EnsemblBacteria" id="AAO80421">
    <property type="protein sequence ID" value="AAO80421"/>
    <property type="gene ID" value="EF_0585"/>
</dbReference>
<dbReference type="KEGG" id="efa:EF0585"/>
<dbReference type="PATRIC" id="fig|226185.45.peg.2528"/>
<dbReference type="eggNOG" id="COG0199">
    <property type="taxonomic scope" value="Bacteria"/>
</dbReference>
<dbReference type="HOGENOM" id="CLU_139869_0_0_9"/>
<dbReference type="Proteomes" id="UP000001415">
    <property type="component" value="Chromosome"/>
</dbReference>
<dbReference type="GO" id="GO:0005737">
    <property type="term" value="C:cytoplasm"/>
    <property type="evidence" value="ECO:0007669"/>
    <property type="project" value="UniProtKB-ARBA"/>
</dbReference>
<dbReference type="GO" id="GO:0015935">
    <property type="term" value="C:small ribosomal subunit"/>
    <property type="evidence" value="ECO:0007669"/>
    <property type="project" value="TreeGrafter"/>
</dbReference>
<dbReference type="GO" id="GO:0019843">
    <property type="term" value="F:rRNA binding"/>
    <property type="evidence" value="ECO:0007669"/>
    <property type="project" value="UniProtKB-UniRule"/>
</dbReference>
<dbReference type="GO" id="GO:0003735">
    <property type="term" value="F:structural constituent of ribosome"/>
    <property type="evidence" value="ECO:0007669"/>
    <property type="project" value="InterPro"/>
</dbReference>
<dbReference type="GO" id="GO:0006412">
    <property type="term" value="P:translation"/>
    <property type="evidence" value="ECO:0007669"/>
    <property type="project" value="UniProtKB-UniRule"/>
</dbReference>
<dbReference type="Gene3D" id="4.10.830.10">
    <property type="entry name" value="30s Ribosomal Protein S14, Chain N"/>
    <property type="match status" value="1"/>
</dbReference>
<dbReference type="HAMAP" id="MF_00537">
    <property type="entry name" value="Ribosomal_uS14_1"/>
    <property type="match status" value="1"/>
</dbReference>
<dbReference type="InterPro" id="IPR001209">
    <property type="entry name" value="Ribosomal_uS14"/>
</dbReference>
<dbReference type="InterPro" id="IPR023036">
    <property type="entry name" value="Ribosomal_uS14_bac/plastid"/>
</dbReference>
<dbReference type="InterPro" id="IPR043140">
    <property type="entry name" value="Ribosomal_uS14_sf"/>
</dbReference>
<dbReference type="NCBIfam" id="NF006477">
    <property type="entry name" value="PRK08881.1"/>
    <property type="match status" value="1"/>
</dbReference>
<dbReference type="PANTHER" id="PTHR19836">
    <property type="entry name" value="30S RIBOSOMAL PROTEIN S14"/>
    <property type="match status" value="1"/>
</dbReference>
<dbReference type="PANTHER" id="PTHR19836:SF19">
    <property type="entry name" value="SMALL RIBOSOMAL SUBUNIT PROTEIN US14M"/>
    <property type="match status" value="1"/>
</dbReference>
<dbReference type="Pfam" id="PF00253">
    <property type="entry name" value="Ribosomal_S14"/>
    <property type="match status" value="1"/>
</dbReference>
<dbReference type="SUPFAM" id="SSF57716">
    <property type="entry name" value="Glucocorticoid receptor-like (DNA-binding domain)"/>
    <property type="match status" value="1"/>
</dbReference>
<evidence type="ECO:0000255" key="1">
    <source>
        <dbReference type="HAMAP-Rule" id="MF_00537"/>
    </source>
</evidence>
<evidence type="ECO:0000256" key="2">
    <source>
        <dbReference type="SAM" id="MobiDB-lite"/>
    </source>
</evidence>
<evidence type="ECO:0000305" key="3"/>
<sequence>MAKKSKIAKAKKQMAMIEKYADKRQELKAAGDRTALAKLPRDSNPNRLRLRDQTDGRPRGYMRKFGMSRIKFRELAHQGLIPGVKKASW</sequence>
<reference key="1">
    <citation type="journal article" date="2002" name="Nature">
        <title>Modulation of virulence within a pathogenicity island in vancomycin-resistant Enterococcus faecalis.</title>
        <authorList>
            <person name="Shankar N."/>
            <person name="Baghdayan A.S."/>
            <person name="Gilmore M.S."/>
        </authorList>
    </citation>
    <scope>NUCLEOTIDE SEQUENCE [GENOMIC DNA]</scope>
    <source>
        <strain>MMH594</strain>
    </source>
</reference>
<reference key="2">
    <citation type="journal article" date="2003" name="Science">
        <title>Role of mobile DNA in the evolution of vancomycin-resistant Enterococcus faecalis.</title>
        <authorList>
            <person name="Paulsen I.T."/>
            <person name="Banerjei L."/>
            <person name="Myers G.S.A."/>
            <person name="Nelson K.E."/>
            <person name="Seshadri R."/>
            <person name="Read T.D."/>
            <person name="Fouts D.E."/>
            <person name="Eisen J.A."/>
            <person name="Gill S.R."/>
            <person name="Heidelberg J.F."/>
            <person name="Tettelin H."/>
            <person name="Dodson R.J."/>
            <person name="Umayam L.A."/>
            <person name="Brinkac L.M."/>
            <person name="Beanan M.J."/>
            <person name="Daugherty S.C."/>
            <person name="DeBoy R.T."/>
            <person name="Durkin S.A."/>
            <person name="Kolonay J.F."/>
            <person name="Madupu R."/>
            <person name="Nelson W.C."/>
            <person name="Vamathevan J.J."/>
            <person name="Tran B."/>
            <person name="Upton J."/>
            <person name="Hansen T."/>
            <person name="Shetty J."/>
            <person name="Khouri H.M."/>
            <person name="Utterback T.R."/>
            <person name="Radune D."/>
            <person name="Ketchum K.A."/>
            <person name="Dougherty B.A."/>
            <person name="Fraser C.M."/>
        </authorList>
    </citation>
    <scope>NUCLEOTIDE SEQUENCE [LARGE SCALE GENOMIC DNA]</scope>
    <source>
        <strain>ATCC 700802 / V583</strain>
    </source>
</reference>
<comment type="function">
    <text evidence="1">Binds 16S rRNA, required for the assembly of 30S particles and may also be responsible for determining the conformation of the 16S rRNA at the A site.</text>
</comment>
<comment type="subunit">
    <text evidence="1">Part of the 30S ribosomal subunit. Contacts proteins S3 and S10.</text>
</comment>
<comment type="similarity">
    <text evidence="1">Belongs to the universal ribosomal protein uS14 family.</text>
</comment>
<proteinExistence type="inferred from homology"/>
<keyword id="KW-1185">Reference proteome</keyword>
<keyword id="KW-0687">Ribonucleoprotein</keyword>
<keyword id="KW-0689">Ribosomal protein</keyword>
<keyword id="KW-0694">RNA-binding</keyword>
<keyword id="KW-0699">rRNA-binding</keyword>
<gene>
    <name evidence="1" type="primary">rpsN1</name>
    <name type="synonym">rpsN-2</name>
    <name type="ordered locus">EF_0585</name>
    <name type="ORF">ef0103</name>
</gene>
<protein>
    <recommendedName>
        <fullName evidence="1">Small ribosomal subunit protein uS14A</fullName>
    </recommendedName>
    <alternativeName>
        <fullName evidence="3">30S ribosomal protein S14 1</fullName>
    </alternativeName>
</protein>
<accession>Q8KU58</accession>
<accession>Q7C3P6</accession>
<feature type="chain" id="PRO_0000269045" description="Small ribosomal subunit protein uS14A">
    <location>
        <begin position="1"/>
        <end position="89"/>
    </location>
</feature>
<feature type="region of interest" description="Disordered" evidence="2">
    <location>
        <begin position="29"/>
        <end position="62"/>
    </location>
</feature>
<feature type="compositionally biased region" description="Basic and acidic residues" evidence="2">
    <location>
        <begin position="49"/>
        <end position="58"/>
    </location>
</feature>
<organism>
    <name type="scientific">Enterococcus faecalis (strain ATCC 700802 / V583)</name>
    <dbReference type="NCBI Taxonomy" id="226185"/>
    <lineage>
        <taxon>Bacteria</taxon>
        <taxon>Bacillati</taxon>
        <taxon>Bacillota</taxon>
        <taxon>Bacilli</taxon>
        <taxon>Lactobacillales</taxon>
        <taxon>Enterococcaceae</taxon>
        <taxon>Enterococcus</taxon>
    </lineage>
</organism>
<name>RS141_ENTFA</name>